<feature type="chain" id="PRO_0000221153" description="Protein NipSnap homolog 3A">
    <location>
        <begin position="1"/>
        <end position="247"/>
    </location>
</feature>
<feature type="modified residue" description="N6-acetyllysine" evidence="2">
    <location>
        <position position="48"/>
    </location>
</feature>
<feature type="modified residue" description="N6-acetyllysine" evidence="2">
    <location>
        <position position="166"/>
    </location>
</feature>
<name>NPS3A_PONAB</name>
<evidence type="ECO:0000250" key="1"/>
<evidence type="ECO:0000250" key="2">
    <source>
        <dbReference type="UniProtKB" id="Q9UFN0"/>
    </source>
</evidence>
<evidence type="ECO:0000305" key="3"/>
<keyword id="KW-0007">Acetylation</keyword>
<keyword id="KW-0963">Cytoplasm</keyword>
<keyword id="KW-1185">Reference proteome</keyword>
<dbReference type="EMBL" id="CR859109">
    <property type="protein sequence ID" value="CAH91301.1"/>
    <property type="molecule type" value="mRNA"/>
</dbReference>
<dbReference type="RefSeq" id="NP_001125770.1">
    <property type="nucleotide sequence ID" value="NM_001132298.1"/>
</dbReference>
<dbReference type="SMR" id="Q5RAA9"/>
<dbReference type="FunCoup" id="Q5RAA9">
    <property type="interactions" value="1920"/>
</dbReference>
<dbReference type="STRING" id="9601.ENSPPYP00000021809"/>
<dbReference type="Ensembl" id="ENSPPYT00000022704.3">
    <property type="protein sequence ID" value="ENSPPYP00000021809.2"/>
    <property type="gene ID" value="ENSPPYG00000019468.3"/>
</dbReference>
<dbReference type="GeneID" id="100172697"/>
<dbReference type="KEGG" id="pon:100172697"/>
<dbReference type="CTD" id="25934"/>
<dbReference type="eggNOG" id="KOG2883">
    <property type="taxonomic scope" value="Eukaryota"/>
</dbReference>
<dbReference type="GeneTree" id="ENSGT00950000183018"/>
<dbReference type="HOGENOM" id="CLU_085919_0_1_1"/>
<dbReference type="InParanoid" id="Q5RAA9"/>
<dbReference type="OrthoDB" id="10262843at2759"/>
<dbReference type="TreeFam" id="TF314501"/>
<dbReference type="Proteomes" id="UP000001595">
    <property type="component" value="Chromosome 9"/>
</dbReference>
<dbReference type="GO" id="GO:0005829">
    <property type="term" value="C:cytosol"/>
    <property type="evidence" value="ECO:0007669"/>
    <property type="project" value="UniProtKB-SubCell"/>
</dbReference>
<dbReference type="GO" id="GO:0005739">
    <property type="term" value="C:mitochondrion"/>
    <property type="evidence" value="ECO:0007669"/>
    <property type="project" value="TreeGrafter"/>
</dbReference>
<dbReference type="GO" id="GO:0000423">
    <property type="term" value="P:mitophagy"/>
    <property type="evidence" value="ECO:0007669"/>
    <property type="project" value="UniProtKB-ARBA"/>
</dbReference>
<dbReference type="FunFam" id="3.30.70.100:FF:000017">
    <property type="entry name" value="Protein NipSnap homolog 3A"/>
    <property type="match status" value="1"/>
</dbReference>
<dbReference type="FunFam" id="3.30.70.100:FF:000019">
    <property type="entry name" value="Protein NipSnap homolog 3A"/>
    <property type="match status" value="1"/>
</dbReference>
<dbReference type="Gene3D" id="3.30.70.100">
    <property type="match status" value="2"/>
</dbReference>
<dbReference type="InterPro" id="IPR011008">
    <property type="entry name" value="Dimeric_a/b-barrel"/>
</dbReference>
<dbReference type="InterPro" id="IPR012577">
    <property type="entry name" value="NIPSNAP"/>
</dbReference>
<dbReference type="InterPro" id="IPR051557">
    <property type="entry name" value="NipSnap_domain"/>
</dbReference>
<dbReference type="PANTHER" id="PTHR21017">
    <property type="entry name" value="NIPSNAP-RELATED"/>
    <property type="match status" value="1"/>
</dbReference>
<dbReference type="PANTHER" id="PTHR21017:SF23">
    <property type="entry name" value="PROTEIN NIPSNAP HOMOLOG 3A"/>
    <property type="match status" value="1"/>
</dbReference>
<dbReference type="Pfam" id="PF07978">
    <property type="entry name" value="NIPSNAP"/>
    <property type="match status" value="2"/>
</dbReference>
<dbReference type="SUPFAM" id="SSF54909">
    <property type="entry name" value="Dimeric alpha+beta barrel"/>
    <property type="match status" value="2"/>
</dbReference>
<organism>
    <name type="scientific">Pongo abelii</name>
    <name type="common">Sumatran orangutan</name>
    <name type="synonym">Pongo pygmaeus abelii</name>
    <dbReference type="NCBI Taxonomy" id="9601"/>
    <lineage>
        <taxon>Eukaryota</taxon>
        <taxon>Metazoa</taxon>
        <taxon>Chordata</taxon>
        <taxon>Craniata</taxon>
        <taxon>Vertebrata</taxon>
        <taxon>Euteleostomi</taxon>
        <taxon>Mammalia</taxon>
        <taxon>Eutheria</taxon>
        <taxon>Euarchontoglires</taxon>
        <taxon>Primates</taxon>
        <taxon>Haplorrhini</taxon>
        <taxon>Catarrhini</taxon>
        <taxon>Hominidae</taxon>
        <taxon>Pongo</taxon>
    </lineage>
</organism>
<reference key="1">
    <citation type="submission" date="2004-11" db="EMBL/GenBank/DDBJ databases">
        <authorList>
            <consortium name="The German cDNA consortium"/>
        </authorList>
    </citation>
    <scope>NUCLEOTIDE SEQUENCE [LARGE SCALE MRNA]</scope>
    <source>
        <tissue>Heart</tissue>
    </source>
</reference>
<proteinExistence type="evidence at transcript level"/>
<gene>
    <name type="primary">NIPSNAP3A</name>
</gene>
<comment type="subcellular location">
    <subcellularLocation>
        <location>Cytoplasm</location>
        <location>Cytosol</location>
    </subcellularLocation>
    <text evidence="1">May be part of some vesicular structure distinct from lysosomal vesicles.</text>
</comment>
<comment type="similarity">
    <text evidence="3">Belongs to the NipSnap family.</text>
</comment>
<accession>Q5RAA9</accession>
<protein>
    <recommendedName>
        <fullName>Protein NipSnap homolog 3A</fullName>
        <shortName>NipSnap3A</shortName>
    </recommendedName>
</protein>
<sequence length="247" mass="28448">MLLLRSALTRALASRTLAPQVCSSFATGPRQYDGIFYEFRSYYLKPSKMNEFLENFKKNAHLRTAHSELVGYWSVEFGGRMNTVFHIWKYDNFAHRTEVRKALAKDKEWQEQFLIPNLALIDKQESEITYLVPWCKLEKPPKEGVYELATFQMKPGGPALWGDAFKRAVHAHVNLGYTKLVGVFHTEYGALNRVHVLWWNESADSRAAGRHKSHEDPRVVAAVRESVNYLVSQQNMLLIPTSFSPLK</sequence>